<feature type="chain" id="PRO_1000204904" description="Large ribosomal subunit protein bL33">
    <location>
        <begin position="1"/>
        <end position="55"/>
    </location>
</feature>
<protein>
    <recommendedName>
        <fullName evidence="1">Large ribosomal subunit protein bL33</fullName>
    </recommendedName>
    <alternativeName>
        <fullName evidence="2">50S ribosomal protein L33</fullName>
    </alternativeName>
</protein>
<proteinExistence type="inferred from homology"/>
<accession>B8GZL9</accession>
<organism>
    <name type="scientific">Caulobacter vibrioides (strain NA1000 / CB15N)</name>
    <name type="common">Caulobacter crescentus</name>
    <dbReference type="NCBI Taxonomy" id="565050"/>
    <lineage>
        <taxon>Bacteria</taxon>
        <taxon>Pseudomonadati</taxon>
        <taxon>Pseudomonadota</taxon>
        <taxon>Alphaproteobacteria</taxon>
        <taxon>Caulobacterales</taxon>
        <taxon>Caulobacteraceae</taxon>
        <taxon>Caulobacter</taxon>
    </lineage>
</organism>
<gene>
    <name evidence="1" type="primary">rpmG</name>
    <name type="ordered locus">CCNA_02543</name>
</gene>
<evidence type="ECO:0000255" key="1">
    <source>
        <dbReference type="HAMAP-Rule" id="MF_00294"/>
    </source>
</evidence>
<evidence type="ECO:0000305" key="2"/>
<reference key="1">
    <citation type="journal article" date="2010" name="J. Bacteriol.">
        <title>The genetic basis of laboratory adaptation in Caulobacter crescentus.</title>
        <authorList>
            <person name="Marks M.E."/>
            <person name="Castro-Rojas C.M."/>
            <person name="Teiling C."/>
            <person name="Du L."/>
            <person name="Kapatral V."/>
            <person name="Walunas T.L."/>
            <person name="Crosson S."/>
        </authorList>
    </citation>
    <scope>NUCLEOTIDE SEQUENCE [LARGE SCALE GENOMIC DNA]</scope>
    <source>
        <strain>NA1000 / CB15N</strain>
    </source>
</reference>
<dbReference type="EMBL" id="CP001340">
    <property type="protein sequence ID" value="ACL96008.1"/>
    <property type="molecule type" value="Genomic_DNA"/>
</dbReference>
<dbReference type="RefSeq" id="WP_010920317.1">
    <property type="nucleotide sequence ID" value="NC_011916.1"/>
</dbReference>
<dbReference type="RefSeq" id="YP_002517916.1">
    <property type="nucleotide sequence ID" value="NC_011916.1"/>
</dbReference>
<dbReference type="SMR" id="B8GZL9"/>
<dbReference type="GeneID" id="7330696"/>
<dbReference type="KEGG" id="ccs:CCNA_02543"/>
<dbReference type="PATRIC" id="fig|565050.3.peg.2494"/>
<dbReference type="HOGENOM" id="CLU_190949_1_1_5"/>
<dbReference type="OrthoDB" id="21586at2"/>
<dbReference type="PhylomeDB" id="B8GZL9"/>
<dbReference type="Proteomes" id="UP000001364">
    <property type="component" value="Chromosome"/>
</dbReference>
<dbReference type="GO" id="GO:0022625">
    <property type="term" value="C:cytosolic large ribosomal subunit"/>
    <property type="evidence" value="ECO:0007669"/>
    <property type="project" value="TreeGrafter"/>
</dbReference>
<dbReference type="GO" id="GO:0003735">
    <property type="term" value="F:structural constituent of ribosome"/>
    <property type="evidence" value="ECO:0007669"/>
    <property type="project" value="InterPro"/>
</dbReference>
<dbReference type="GO" id="GO:0006412">
    <property type="term" value="P:translation"/>
    <property type="evidence" value="ECO:0007669"/>
    <property type="project" value="UniProtKB-UniRule"/>
</dbReference>
<dbReference type="Gene3D" id="2.20.28.120">
    <property type="entry name" value="Ribosomal protein L33"/>
    <property type="match status" value="1"/>
</dbReference>
<dbReference type="HAMAP" id="MF_00294">
    <property type="entry name" value="Ribosomal_bL33"/>
    <property type="match status" value="1"/>
</dbReference>
<dbReference type="InterPro" id="IPR001705">
    <property type="entry name" value="Ribosomal_bL33"/>
</dbReference>
<dbReference type="InterPro" id="IPR018264">
    <property type="entry name" value="Ribosomal_bL33_CS"/>
</dbReference>
<dbReference type="InterPro" id="IPR038584">
    <property type="entry name" value="Ribosomal_bL33_sf"/>
</dbReference>
<dbReference type="InterPro" id="IPR011332">
    <property type="entry name" value="Ribosomal_zn-bd"/>
</dbReference>
<dbReference type="NCBIfam" id="NF001860">
    <property type="entry name" value="PRK00595.1"/>
    <property type="match status" value="1"/>
</dbReference>
<dbReference type="NCBIfam" id="TIGR01023">
    <property type="entry name" value="rpmG_bact"/>
    <property type="match status" value="1"/>
</dbReference>
<dbReference type="PANTHER" id="PTHR15238">
    <property type="entry name" value="54S RIBOSOMAL PROTEIN L39, MITOCHONDRIAL"/>
    <property type="match status" value="1"/>
</dbReference>
<dbReference type="PANTHER" id="PTHR15238:SF1">
    <property type="entry name" value="LARGE RIBOSOMAL SUBUNIT PROTEIN BL33M"/>
    <property type="match status" value="1"/>
</dbReference>
<dbReference type="Pfam" id="PF00471">
    <property type="entry name" value="Ribosomal_L33"/>
    <property type="match status" value="1"/>
</dbReference>
<dbReference type="SUPFAM" id="SSF57829">
    <property type="entry name" value="Zn-binding ribosomal proteins"/>
    <property type="match status" value="1"/>
</dbReference>
<dbReference type="PROSITE" id="PS00582">
    <property type="entry name" value="RIBOSOMAL_L33"/>
    <property type="match status" value="1"/>
</dbReference>
<keyword id="KW-1185">Reference proteome</keyword>
<keyword id="KW-0687">Ribonucleoprotein</keyword>
<keyword id="KW-0689">Ribosomal protein</keyword>
<sequence>MAKPASIKIRLNSTADTGFFYVTKKNARTKTEKMVLKKYDPVIRKHVEFREGKIK</sequence>
<name>RL33_CAUVN</name>
<comment type="similarity">
    <text evidence="1">Belongs to the bacterial ribosomal protein bL33 family.</text>
</comment>